<comment type="function">
    <text evidence="1">The glycine cleavage system catalyzes the degradation of glycine.</text>
</comment>
<comment type="catalytic activity">
    <reaction evidence="1">
        <text>N(6)-[(R)-S(8)-aminomethyldihydrolipoyl]-L-lysyl-[protein] + (6S)-5,6,7,8-tetrahydrofolate = N(6)-[(R)-dihydrolipoyl]-L-lysyl-[protein] + (6R)-5,10-methylene-5,6,7,8-tetrahydrofolate + NH4(+)</text>
        <dbReference type="Rhea" id="RHEA:16945"/>
        <dbReference type="Rhea" id="RHEA-COMP:10475"/>
        <dbReference type="Rhea" id="RHEA-COMP:10492"/>
        <dbReference type="ChEBI" id="CHEBI:15636"/>
        <dbReference type="ChEBI" id="CHEBI:28938"/>
        <dbReference type="ChEBI" id="CHEBI:57453"/>
        <dbReference type="ChEBI" id="CHEBI:83100"/>
        <dbReference type="ChEBI" id="CHEBI:83143"/>
        <dbReference type="EC" id="2.1.2.10"/>
    </reaction>
</comment>
<comment type="subunit">
    <text evidence="1">The glycine cleavage system is composed of four proteins: P, T, L and H.</text>
</comment>
<comment type="similarity">
    <text evidence="1">Belongs to the GcvT family.</text>
</comment>
<reference key="1">
    <citation type="submission" date="2007-10" db="EMBL/GenBank/DDBJ databases">
        <title>Complete sequence of Shewanella pealeana ATCC 700345.</title>
        <authorList>
            <consortium name="US DOE Joint Genome Institute"/>
            <person name="Copeland A."/>
            <person name="Lucas S."/>
            <person name="Lapidus A."/>
            <person name="Barry K."/>
            <person name="Glavina del Rio T."/>
            <person name="Dalin E."/>
            <person name="Tice H."/>
            <person name="Pitluck S."/>
            <person name="Chertkov O."/>
            <person name="Brettin T."/>
            <person name="Bruce D."/>
            <person name="Detter J.C."/>
            <person name="Han C."/>
            <person name="Schmutz J."/>
            <person name="Larimer F."/>
            <person name="Land M."/>
            <person name="Hauser L."/>
            <person name="Kyrpides N."/>
            <person name="Kim E."/>
            <person name="Zhao J.-S.Z."/>
            <person name="Manno D."/>
            <person name="Hawari J."/>
            <person name="Richardson P."/>
        </authorList>
    </citation>
    <scope>NUCLEOTIDE SEQUENCE [LARGE SCALE GENOMIC DNA]</scope>
    <source>
        <strain>ATCC 700345 / ANG-SQ1</strain>
    </source>
</reference>
<accession>A8H7T1</accession>
<proteinExistence type="inferred from homology"/>
<feature type="chain" id="PRO_1000078593" description="Aminomethyltransferase">
    <location>
        <begin position="1"/>
        <end position="364"/>
    </location>
</feature>
<keyword id="KW-0032">Aminotransferase</keyword>
<keyword id="KW-1185">Reference proteome</keyword>
<keyword id="KW-0808">Transferase</keyword>
<name>GCST_SHEPA</name>
<evidence type="ECO:0000255" key="1">
    <source>
        <dbReference type="HAMAP-Rule" id="MF_00259"/>
    </source>
</evidence>
<gene>
    <name evidence="1" type="primary">gcvT</name>
    <name type="ordered locus">Spea_3303</name>
</gene>
<dbReference type="EC" id="2.1.2.10" evidence="1"/>
<dbReference type="EMBL" id="CP000851">
    <property type="protein sequence ID" value="ABV88618.1"/>
    <property type="molecule type" value="Genomic_DNA"/>
</dbReference>
<dbReference type="RefSeq" id="WP_012156517.1">
    <property type="nucleotide sequence ID" value="NC_009901.1"/>
</dbReference>
<dbReference type="SMR" id="A8H7T1"/>
<dbReference type="STRING" id="398579.Spea_3303"/>
<dbReference type="KEGG" id="spl:Spea_3303"/>
<dbReference type="eggNOG" id="COG0404">
    <property type="taxonomic scope" value="Bacteria"/>
</dbReference>
<dbReference type="HOGENOM" id="CLU_007884_10_2_6"/>
<dbReference type="OrthoDB" id="9774591at2"/>
<dbReference type="Proteomes" id="UP000002608">
    <property type="component" value="Chromosome"/>
</dbReference>
<dbReference type="GO" id="GO:0005829">
    <property type="term" value="C:cytosol"/>
    <property type="evidence" value="ECO:0007669"/>
    <property type="project" value="TreeGrafter"/>
</dbReference>
<dbReference type="GO" id="GO:0005960">
    <property type="term" value="C:glycine cleavage complex"/>
    <property type="evidence" value="ECO:0007669"/>
    <property type="project" value="InterPro"/>
</dbReference>
<dbReference type="GO" id="GO:0004047">
    <property type="term" value="F:aminomethyltransferase activity"/>
    <property type="evidence" value="ECO:0007669"/>
    <property type="project" value="UniProtKB-UniRule"/>
</dbReference>
<dbReference type="GO" id="GO:0008483">
    <property type="term" value="F:transaminase activity"/>
    <property type="evidence" value="ECO:0007669"/>
    <property type="project" value="UniProtKB-KW"/>
</dbReference>
<dbReference type="GO" id="GO:0019464">
    <property type="term" value="P:glycine decarboxylation via glycine cleavage system"/>
    <property type="evidence" value="ECO:0007669"/>
    <property type="project" value="UniProtKB-UniRule"/>
</dbReference>
<dbReference type="FunFam" id="2.40.30.110:FF:000001">
    <property type="entry name" value="Aminomethyltransferase"/>
    <property type="match status" value="1"/>
</dbReference>
<dbReference type="FunFam" id="3.30.70.1400:FF:000001">
    <property type="entry name" value="Aminomethyltransferase"/>
    <property type="match status" value="1"/>
</dbReference>
<dbReference type="FunFam" id="4.10.1250.10:FF:000001">
    <property type="entry name" value="Aminomethyltransferase"/>
    <property type="match status" value="1"/>
</dbReference>
<dbReference type="Gene3D" id="2.40.30.110">
    <property type="entry name" value="Aminomethyltransferase beta-barrel domains"/>
    <property type="match status" value="1"/>
</dbReference>
<dbReference type="Gene3D" id="3.30.70.1400">
    <property type="entry name" value="Aminomethyltransferase beta-barrel domains"/>
    <property type="match status" value="1"/>
</dbReference>
<dbReference type="Gene3D" id="4.10.1250.10">
    <property type="entry name" value="Aminomethyltransferase fragment"/>
    <property type="match status" value="1"/>
</dbReference>
<dbReference type="Gene3D" id="3.30.1360.120">
    <property type="entry name" value="Probable tRNA modification gtpase trme, domain 1"/>
    <property type="match status" value="1"/>
</dbReference>
<dbReference type="HAMAP" id="MF_00259">
    <property type="entry name" value="GcvT"/>
    <property type="match status" value="1"/>
</dbReference>
<dbReference type="InterPro" id="IPR006223">
    <property type="entry name" value="GCS_T"/>
</dbReference>
<dbReference type="InterPro" id="IPR022903">
    <property type="entry name" value="GCS_T_bac"/>
</dbReference>
<dbReference type="InterPro" id="IPR013977">
    <property type="entry name" value="GCST_C"/>
</dbReference>
<dbReference type="InterPro" id="IPR006222">
    <property type="entry name" value="GCV_T_N"/>
</dbReference>
<dbReference type="InterPro" id="IPR028896">
    <property type="entry name" value="GcvT/YgfZ/DmdA"/>
</dbReference>
<dbReference type="InterPro" id="IPR029043">
    <property type="entry name" value="GcvT/YgfZ_C"/>
</dbReference>
<dbReference type="InterPro" id="IPR027266">
    <property type="entry name" value="TrmE/GcvT_dom1"/>
</dbReference>
<dbReference type="NCBIfam" id="TIGR00528">
    <property type="entry name" value="gcvT"/>
    <property type="match status" value="1"/>
</dbReference>
<dbReference type="NCBIfam" id="NF001567">
    <property type="entry name" value="PRK00389.1"/>
    <property type="match status" value="1"/>
</dbReference>
<dbReference type="PANTHER" id="PTHR43757">
    <property type="entry name" value="AMINOMETHYLTRANSFERASE"/>
    <property type="match status" value="1"/>
</dbReference>
<dbReference type="PANTHER" id="PTHR43757:SF2">
    <property type="entry name" value="AMINOMETHYLTRANSFERASE, MITOCHONDRIAL"/>
    <property type="match status" value="1"/>
</dbReference>
<dbReference type="Pfam" id="PF01571">
    <property type="entry name" value="GCV_T"/>
    <property type="match status" value="1"/>
</dbReference>
<dbReference type="Pfam" id="PF08669">
    <property type="entry name" value="GCV_T_C"/>
    <property type="match status" value="1"/>
</dbReference>
<dbReference type="PIRSF" id="PIRSF006487">
    <property type="entry name" value="GcvT"/>
    <property type="match status" value="1"/>
</dbReference>
<dbReference type="SUPFAM" id="SSF101790">
    <property type="entry name" value="Aminomethyltransferase beta-barrel domain"/>
    <property type="match status" value="1"/>
</dbReference>
<dbReference type="SUPFAM" id="SSF103025">
    <property type="entry name" value="Folate-binding domain"/>
    <property type="match status" value="1"/>
</dbReference>
<sequence length="364" mass="39646">MANKTVLFNKHLESNGKMVDFHGWDMPLNYGSQIEEHHAVRQDAGMFDVSHMTVVDVIGDDACAFLRKLLANDVAKLKVPGKALYGGMLDHNGGVIDDLITYYLSDTEYRIVVNSATREKDLAWINEQVKGFSVEVTERPELAMIAVQGPNAKAKAATVFNDAQNAAIEGMKPFFGVQAGSLFIATTGYTGETGYEVIVPNDEAEALWQAFLDAGIKPCGLGARDTLRLEAGMNLYGLDMDESVNPLAANMGWTVAWEPAERDFNGRQALEKIKAEGTDKLVGLIMDAKGVIRHGMSVFFTDSDGVEQQGTITSGTFSPTLGYSIAMARVPRSIGDVAEVEMRKKRVPVKVIAPSFVRNGKQAF</sequence>
<protein>
    <recommendedName>
        <fullName evidence="1">Aminomethyltransferase</fullName>
        <ecNumber evidence="1">2.1.2.10</ecNumber>
    </recommendedName>
    <alternativeName>
        <fullName evidence="1">Glycine cleavage system T protein</fullName>
    </alternativeName>
</protein>
<organism>
    <name type="scientific">Shewanella pealeana (strain ATCC 700345 / ANG-SQ1)</name>
    <dbReference type="NCBI Taxonomy" id="398579"/>
    <lineage>
        <taxon>Bacteria</taxon>
        <taxon>Pseudomonadati</taxon>
        <taxon>Pseudomonadota</taxon>
        <taxon>Gammaproteobacteria</taxon>
        <taxon>Alteromonadales</taxon>
        <taxon>Shewanellaceae</taxon>
        <taxon>Shewanella</taxon>
    </lineage>
</organism>